<comment type="function">
    <text evidence="1">Key component of the proton channel; it plays a direct role in the translocation of protons across the membrane.</text>
</comment>
<comment type="subunit">
    <text evidence="1">F-type ATPases have 2 components, CF(1) - the catalytic core - and CF(0) - the membrane proton channel. CF(1) has five subunits: alpha(3), beta(3), gamma(1), delta(1), epsilon(1). CF(0) has four main subunits: a, b, b' and c.</text>
</comment>
<comment type="subcellular location">
    <subcellularLocation>
        <location evidence="1">Cell inner membrane</location>
        <topology evidence="1">Multi-pass membrane protein</topology>
    </subcellularLocation>
</comment>
<comment type="similarity">
    <text evidence="1">Belongs to the ATPase A chain family.</text>
</comment>
<protein>
    <recommendedName>
        <fullName evidence="1">ATP synthase subunit a</fullName>
    </recommendedName>
    <alternativeName>
        <fullName evidence="1">ATP synthase F0 sector subunit a</fullName>
    </alternativeName>
    <alternativeName>
        <fullName evidence="1">F-ATPase subunit 6</fullName>
    </alternativeName>
</protein>
<reference key="1">
    <citation type="journal article" date="2003" name="DNA Res.">
        <title>Complete genome structure of Gloeobacter violaceus PCC 7421, a cyanobacterium that lacks thylakoids.</title>
        <authorList>
            <person name="Nakamura Y."/>
            <person name="Kaneko T."/>
            <person name="Sato S."/>
            <person name="Mimuro M."/>
            <person name="Miyashita H."/>
            <person name="Tsuchiya T."/>
            <person name="Sasamoto S."/>
            <person name="Watanabe A."/>
            <person name="Kawashima K."/>
            <person name="Kishida Y."/>
            <person name="Kiyokawa C."/>
            <person name="Kohara M."/>
            <person name="Matsumoto M."/>
            <person name="Matsuno A."/>
            <person name="Nakazaki N."/>
            <person name="Shimpo S."/>
            <person name="Takeuchi C."/>
            <person name="Yamada M."/>
            <person name="Tabata S."/>
        </authorList>
    </citation>
    <scope>NUCLEOTIDE SEQUENCE [LARGE SCALE GENOMIC DNA]</scope>
    <source>
        <strain>ATCC 29082 / PCC 7421</strain>
    </source>
</reference>
<sequence>MELALATLGNQPLIAAVEVGKHLTWQLGPLSVHGQTMITTWVVMLLLIGLTFIGTRKLQRVPSGLQNFLEYAYDLLASIARNQIGEKQYRSWVPLIGTIFLFVLFANWLGQLPLRLFHIPEGELASPTNDINTTVALSLIALVSYIYAGLRKSGFGYFKHYFESPILAAVWVLEFFTRPLSLSIRLFGNILAEELVVAVLILLVPILVPVPLMILFLLTGAIQALVFSTLTASYVGEAVEDHDDHH</sequence>
<dbReference type="EMBL" id="BA000045">
    <property type="protein sequence ID" value="BAC90851.1"/>
    <property type="molecule type" value="Genomic_DNA"/>
</dbReference>
<dbReference type="RefSeq" id="NP_925856.1">
    <property type="nucleotide sequence ID" value="NC_005125.1"/>
</dbReference>
<dbReference type="RefSeq" id="WP_011142904.1">
    <property type="nucleotide sequence ID" value="NC_005125.1"/>
</dbReference>
<dbReference type="SMR" id="Q7NCR8"/>
<dbReference type="FunCoup" id="Q7NCR8">
    <property type="interactions" value="104"/>
</dbReference>
<dbReference type="STRING" id="251221.gene:10760414"/>
<dbReference type="EnsemblBacteria" id="BAC90851">
    <property type="protein sequence ID" value="BAC90851"/>
    <property type="gene ID" value="BAC90851"/>
</dbReference>
<dbReference type="KEGG" id="gvi:gll2910"/>
<dbReference type="PATRIC" id="fig|251221.4.peg.2940"/>
<dbReference type="eggNOG" id="COG0356">
    <property type="taxonomic scope" value="Bacteria"/>
</dbReference>
<dbReference type="HOGENOM" id="CLU_041018_2_4_3"/>
<dbReference type="InParanoid" id="Q7NCR8"/>
<dbReference type="OrthoDB" id="9789241at2"/>
<dbReference type="PhylomeDB" id="Q7NCR8"/>
<dbReference type="Proteomes" id="UP000000557">
    <property type="component" value="Chromosome"/>
</dbReference>
<dbReference type="GO" id="GO:0005886">
    <property type="term" value="C:plasma membrane"/>
    <property type="evidence" value="ECO:0007669"/>
    <property type="project" value="UniProtKB-SubCell"/>
</dbReference>
<dbReference type="GO" id="GO:0045259">
    <property type="term" value="C:proton-transporting ATP synthase complex"/>
    <property type="evidence" value="ECO:0007669"/>
    <property type="project" value="UniProtKB-KW"/>
</dbReference>
<dbReference type="GO" id="GO:0046933">
    <property type="term" value="F:proton-transporting ATP synthase activity, rotational mechanism"/>
    <property type="evidence" value="ECO:0007669"/>
    <property type="project" value="UniProtKB-UniRule"/>
</dbReference>
<dbReference type="CDD" id="cd00310">
    <property type="entry name" value="ATP-synt_Fo_a_6"/>
    <property type="match status" value="1"/>
</dbReference>
<dbReference type="FunFam" id="1.20.120.220:FF:000001">
    <property type="entry name" value="ATP synthase subunit a, chloroplastic"/>
    <property type="match status" value="1"/>
</dbReference>
<dbReference type="Gene3D" id="1.20.120.220">
    <property type="entry name" value="ATP synthase, F0 complex, subunit A"/>
    <property type="match status" value="1"/>
</dbReference>
<dbReference type="HAMAP" id="MF_01393">
    <property type="entry name" value="ATP_synth_a_bact"/>
    <property type="match status" value="1"/>
</dbReference>
<dbReference type="InterPro" id="IPR045082">
    <property type="entry name" value="ATP_syn_F0_a_bact/chloroplast"/>
</dbReference>
<dbReference type="InterPro" id="IPR000568">
    <property type="entry name" value="ATP_synth_F0_asu"/>
</dbReference>
<dbReference type="InterPro" id="IPR023011">
    <property type="entry name" value="ATP_synth_F0_asu_AS"/>
</dbReference>
<dbReference type="InterPro" id="IPR035908">
    <property type="entry name" value="F0_ATP_A_sf"/>
</dbReference>
<dbReference type="NCBIfam" id="TIGR01131">
    <property type="entry name" value="ATP_synt_6_or_A"/>
    <property type="match status" value="1"/>
</dbReference>
<dbReference type="PANTHER" id="PTHR42823">
    <property type="entry name" value="ATP SYNTHASE SUBUNIT A, CHLOROPLASTIC"/>
    <property type="match status" value="1"/>
</dbReference>
<dbReference type="PANTHER" id="PTHR42823:SF3">
    <property type="entry name" value="ATP SYNTHASE SUBUNIT A, CHLOROPLASTIC"/>
    <property type="match status" value="1"/>
</dbReference>
<dbReference type="Pfam" id="PF00119">
    <property type="entry name" value="ATP-synt_A"/>
    <property type="match status" value="1"/>
</dbReference>
<dbReference type="PRINTS" id="PR00123">
    <property type="entry name" value="ATPASEA"/>
</dbReference>
<dbReference type="SUPFAM" id="SSF81336">
    <property type="entry name" value="F1F0 ATP synthase subunit A"/>
    <property type="match status" value="1"/>
</dbReference>
<dbReference type="PROSITE" id="PS00449">
    <property type="entry name" value="ATPASE_A"/>
    <property type="match status" value="1"/>
</dbReference>
<accession>Q7NCR8</accession>
<proteinExistence type="inferred from homology"/>
<feature type="chain" id="PRO_0000362315" description="ATP synthase subunit a">
    <location>
        <begin position="1"/>
        <end position="246"/>
    </location>
</feature>
<feature type="transmembrane region" description="Helical" evidence="1">
    <location>
        <begin position="34"/>
        <end position="54"/>
    </location>
</feature>
<feature type="transmembrane region" description="Helical" evidence="1">
    <location>
        <begin position="92"/>
        <end position="112"/>
    </location>
</feature>
<feature type="transmembrane region" description="Helical" evidence="1">
    <location>
        <begin position="130"/>
        <end position="150"/>
    </location>
</feature>
<feature type="transmembrane region" description="Helical" evidence="1">
    <location>
        <begin position="155"/>
        <end position="175"/>
    </location>
</feature>
<feature type="transmembrane region" description="Helical" evidence="1">
    <location>
        <begin position="196"/>
        <end position="216"/>
    </location>
</feature>
<name>ATP6_GLOVI</name>
<evidence type="ECO:0000255" key="1">
    <source>
        <dbReference type="HAMAP-Rule" id="MF_01393"/>
    </source>
</evidence>
<organism>
    <name type="scientific">Gloeobacter violaceus (strain ATCC 29082 / PCC 7421)</name>
    <dbReference type="NCBI Taxonomy" id="251221"/>
    <lineage>
        <taxon>Bacteria</taxon>
        <taxon>Bacillati</taxon>
        <taxon>Cyanobacteriota</taxon>
        <taxon>Cyanophyceae</taxon>
        <taxon>Gloeobacterales</taxon>
        <taxon>Gloeobacteraceae</taxon>
        <taxon>Gloeobacter</taxon>
    </lineage>
</organism>
<keyword id="KW-0066">ATP synthesis</keyword>
<keyword id="KW-0997">Cell inner membrane</keyword>
<keyword id="KW-1003">Cell membrane</keyword>
<keyword id="KW-0138">CF(0)</keyword>
<keyword id="KW-0375">Hydrogen ion transport</keyword>
<keyword id="KW-0406">Ion transport</keyword>
<keyword id="KW-0472">Membrane</keyword>
<keyword id="KW-1185">Reference proteome</keyword>
<keyword id="KW-0812">Transmembrane</keyword>
<keyword id="KW-1133">Transmembrane helix</keyword>
<keyword id="KW-0813">Transport</keyword>
<gene>
    <name evidence="1" type="primary">atpB</name>
    <name evidence="1" type="synonym">atpI</name>
    <name type="ordered locus">gll2910</name>
</gene>